<gene>
    <name type="primary">brdt</name>
</gene>
<reference key="1">
    <citation type="journal article" date="2010" name="Science">
        <title>The genome of the Western clawed frog Xenopus tropicalis.</title>
        <authorList>
            <person name="Hellsten U."/>
            <person name="Harland R.M."/>
            <person name="Gilchrist M.J."/>
            <person name="Hendrix D."/>
            <person name="Jurka J."/>
            <person name="Kapitonov V."/>
            <person name="Ovcharenko I."/>
            <person name="Putnam N.H."/>
            <person name="Shu S."/>
            <person name="Taher L."/>
            <person name="Blitz I.L."/>
            <person name="Blumberg B."/>
            <person name="Dichmann D.S."/>
            <person name="Dubchak I."/>
            <person name="Amaya E."/>
            <person name="Detter J.C."/>
            <person name="Fletcher R."/>
            <person name="Gerhard D.S."/>
            <person name="Goodstein D."/>
            <person name="Graves T."/>
            <person name="Grigoriev I.V."/>
            <person name="Grimwood J."/>
            <person name="Kawashima T."/>
            <person name="Lindquist E."/>
            <person name="Lucas S.M."/>
            <person name="Mead P.E."/>
            <person name="Mitros T."/>
            <person name="Ogino H."/>
            <person name="Ohta Y."/>
            <person name="Poliakov A.V."/>
            <person name="Pollet N."/>
            <person name="Robert J."/>
            <person name="Salamov A."/>
            <person name="Sater A.K."/>
            <person name="Schmutz J."/>
            <person name="Terry A."/>
            <person name="Vize P.D."/>
            <person name="Warren W.C."/>
            <person name="Wells D."/>
            <person name="Wills A."/>
            <person name="Wilson R.K."/>
            <person name="Zimmerman L.B."/>
            <person name="Zorn A.M."/>
            <person name="Grainger R."/>
            <person name="Grammer T."/>
            <person name="Khokha M.K."/>
            <person name="Richardson P.M."/>
            <person name="Rokhsar D.S."/>
        </authorList>
    </citation>
    <scope>NUCLEOTIDE SEQUENCE [LARGE SCALE GENOMIC DNA]</scope>
</reference>
<accession>F7DRV9</accession>
<name>BRDT_XENTR</name>
<sequence>MSMSSRHLHSSIVNPPPPEYINRKKTGRLTNQLQYLEKVVLKALWRHHFSWPFQQPVDAAKLNLPDYYQIIKNPMDLSTIRKRLEYNYYSKALDCIQDFNTMFTNCYIYNKPGDDIVVMSQELEKVFMEKIAEMPHEEIELSVVGNRGVKSRIKISAVAAEVCKKKMVSQKMHRRTFPCPVIAMMPKRTTLVPLSVIRSSTSSHSASSVSKVNKGIKRKADTTTPAVSLIATSCESSPTLSEPKPNKILSGTEKTRSAETSAVDLPDSQHHIHFIKSNQICEQLKHCNNILNEMMSKKHAEYAWPFYKTVIPTSLLDCSDAIKHPMDLATIRDKMENGLYKDTQDFASDVRLMFMNSYKYNPPDNEVVNMARKMQDVFEGMFAKIPDDPLATQSMVERYKTSTEESSSSSSSEQSSSSDSEDERAQHLALLQEQLRAVQEQLKALTETPIFSKIQPKSAVGVYDKYKQWVKCIEPMGKLLKRKKNYDAKKKKLHVSDEEEDVKPMSYDEKRQLSLDINKLPGEKLGRIVHIIQSREPSLKDSNPNEIEIDFETLKQSTLRHLEKYVMVCLRKRPKKPSSIKSLKSKEQLNKEKKQELEKRLRDVSGQLSSAKKPKIQGFLYPMQSIGGPSRLSESSTSSSASDVSNSSDSSSSDSSDSESATFPKNILAKKQTSTNYEVPLLLYYGCFVNKPRTSIPQNGLCIGSQSLAYTTISTIVHPTPMALMPLHPGSTNYTSLQLLLKYGLHVPLIIENPLGNSVLFENYLEVLHPSQIEQTFAIKEECLKPKYKNAKVKTSFCWEVFSKSLATTHVTIKSSSNSFQQFRKAAIAKEERERALKAQELRRLEDSKAGMQEKLSPSLPMETKVHEMQAQTIDEATKGEPTCNPVHEGITEEERNLARMREQERRRREAMAGTIDMYLQSDIMATFEEHLC</sequence>
<dbReference type="EMBL" id="AAMC01026645">
    <property type="status" value="NOT_ANNOTATED_CDS"/>
    <property type="molecule type" value="Genomic_DNA"/>
</dbReference>
<dbReference type="EMBL" id="AAMC01026646">
    <property type="status" value="NOT_ANNOTATED_CDS"/>
    <property type="molecule type" value="Genomic_DNA"/>
</dbReference>
<dbReference type="EMBL" id="AAMC01026647">
    <property type="status" value="NOT_ANNOTATED_CDS"/>
    <property type="molecule type" value="Genomic_DNA"/>
</dbReference>
<dbReference type="EMBL" id="AAMC01026648">
    <property type="status" value="NOT_ANNOTATED_CDS"/>
    <property type="molecule type" value="Genomic_DNA"/>
</dbReference>
<dbReference type="SMR" id="F7DRV9"/>
<dbReference type="FunCoup" id="F7DRV9">
    <property type="interactions" value="465"/>
</dbReference>
<dbReference type="STRING" id="8364.ENSXETP00000051823"/>
<dbReference type="PaxDb" id="8364-ENSXETP00000049781"/>
<dbReference type="eggNOG" id="KOG1474">
    <property type="taxonomic scope" value="Eukaryota"/>
</dbReference>
<dbReference type="HOGENOM" id="CLU_001499_0_0_1"/>
<dbReference type="InParanoid" id="F7DRV9"/>
<dbReference type="TreeFam" id="TF317345"/>
<dbReference type="Proteomes" id="UP000008143">
    <property type="component" value="Unplaced"/>
</dbReference>
<dbReference type="GO" id="GO:0005634">
    <property type="term" value="C:nucleus"/>
    <property type="evidence" value="ECO:0000250"/>
    <property type="project" value="UniProtKB"/>
</dbReference>
<dbReference type="GO" id="GO:0007141">
    <property type="term" value="P:male meiosis I"/>
    <property type="evidence" value="ECO:0000250"/>
    <property type="project" value="UniProtKB"/>
</dbReference>
<dbReference type="GO" id="GO:0007140">
    <property type="term" value="P:male meiotic nuclear division"/>
    <property type="evidence" value="ECO:0000250"/>
    <property type="project" value="UniProtKB"/>
</dbReference>
<dbReference type="GO" id="GO:0010628">
    <property type="term" value="P:positive regulation of gene expression"/>
    <property type="evidence" value="ECO:0000250"/>
    <property type="project" value="UniProtKB"/>
</dbReference>
<dbReference type="GO" id="GO:0043484">
    <property type="term" value="P:regulation of RNA splicing"/>
    <property type="evidence" value="ECO:0000250"/>
    <property type="project" value="UniProtKB"/>
</dbReference>
<dbReference type="GO" id="GO:0035092">
    <property type="term" value="P:sperm DNA condensation"/>
    <property type="evidence" value="ECO:0000250"/>
    <property type="project" value="UniProtKB"/>
</dbReference>
<dbReference type="CDD" id="cd05497">
    <property type="entry name" value="Bromo_Brdt_I_like"/>
    <property type="match status" value="1"/>
</dbReference>
<dbReference type="FunFam" id="1.20.920.10:FF:000003">
    <property type="entry name" value="Bromodomain-containing protein 2"/>
    <property type="match status" value="1"/>
</dbReference>
<dbReference type="FunFam" id="1.20.1270.220:FF:000001">
    <property type="entry name" value="bromodomain-containing protein 2 isoform X1"/>
    <property type="match status" value="1"/>
</dbReference>
<dbReference type="FunFam" id="1.20.920.10:FF:000002">
    <property type="entry name" value="Bromodomain-containing protein 4"/>
    <property type="match status" value="1"/>
</dbReference>
<dbReference type="Gene3D" id="1.20.1270.220">
    <property type="match status" value="1"/>
</dbReference>
<dbReference type="Gene3D" id="1.20.920.10">
    <property type="entry name" value="Bromodomain-like"/>
    <property type="match status" value="2"/>
</dbReference>
<dbReference type="InterPro" id="IPR031354">
    <property type="entry name" value="BRD4_CDT"/>
</dbReference>
<dbReference type="InterPro" id="IPR043508">
    <property type="entry name" value="Bromo_Brdt_I"/>
</dbReference>
<dbReference type="InterPro" id="IPR050935">
    <property type="entry name" value="Bromo_chromatin_reader"/>
</dbReference>
<dbReference type="InterPro" id="IPR001487">
    <property type="entry name" value="Bromodomain"/>
</dbReference>
<dbReference type="InterPro" id="IPR036427">
    <property type="entry name" value="Bromodomain-like_sf"/>
</dbReference>
<dbReference type="InterPro" id="IPR018359">
    <property type="entry name" value="Bromodomain_CS"/>
</dbReference>
<dbReference type="InterPro" id="IPR027353">
    <property type="entry name" value="NET_dom"/>
</dbReference>
<dbReference type="InterPro" id="IPR038336">
    <property type="entry name" value="NET_sf"/>
</dbReference>
<dbReference type="PANTHER" id="PTHR22880:SF175">
    <property type="entry name" value="BROMODOMAIN TESTIS-SPECIFIC PROTEIN"/>
    <property type="match status" value="1"/>
</dbReference>
<dbReference type="PANTHER" id="PTHR22880">
    <property type="entry name" value="FALZ-RELATED BROMODOMAIN-CONTAINING PROTEINS"/>
    <property type="match status" value="1"/>
</dbReference>
<dbReference type="Pfam" id="PF17035">
    <property type="entry name" value="BET"/>
    <property type="match status" value="1"/>
</dbReference>
<dbReference type="Pfam" id="PF17105">
    <property type="entry name" value="BRD4_CDT"/>
    <property type="match status" value="1"/>
</dbReference>
<dbReference type="Pfam" id="PF00439">
    <property type="entry name" value="Bromodomain"/>
    <property type="match status" value="2"/>
</dbReference>
<dbReference type="PRINTS" id="PR00503">
    <property type="entry name" value="BROMODOMAIN"/>
</dbReference>
<dbReference type="SMART" id="SM00297">
    <property type="entry name" value="BROMO"/>
    <property type="match status" value="2"/>
</dbReference>
<dbReference type="SUPFAM" id="SSF47370">
    <property type="entry name" value="Bromodomain"/>
    <property type="match status" value="2"/>
</dbReference>
<dbReference type="PROSITE" id="PS00633">
    <property type="entry name" value="BROMODOMAIN_1"/>
    <property type="match status" value="1"/>
</dbReference>
<dbReference type="PROSITE" id="PS50014">
    <property type="entry name" value="BROMODOMAIN_2"/>
    <property type="match status" value="2"/>
</dbReference>
<dbReference type="PROSITE" id="PS51525">
    <property type="entry name" value="NET"/>
    <property type="match status" value="1"/>
</dbReference>
<organism>
    <name type="scientific">Xenopus tropicalis</name>
    <name type="common">Western clawed frog</name>
    <name type="synonym">Silurana tropicalis</name>
    <dbReference type="NCBI Taxonomy" id="8364"/>
    <lineage>
        <taxon>Eukaryota</taxon>
        <taxon>Metazoa</taxon>
        <taxon>Chordata</taxon>
        <taxon>Craniata</taxon>
        <taxon>Vertebrata</taxon>
        <taxon>Euteleostomi</taxon>
        <taxon>Amphibia</taxon>
        <taxon>Batrachia</taxon>
        <taxon>Anura</taxon>
        <taxon>Pipoidea</taxon>
        <taxon>Pipidae</taxon>
        <taxon>Xenopodinae</taxon>
        <taxon>Xenopus</taxon>
        <taxon>Silurana</taxon>
    </lineage>
</organism>
<keyword id="KW-0010">Activator</keyword>
<keyword id="KW-0103">Bromodomain</keyword>
<keyword id="KW-0156">Chromatin regulator</keyword>
<keyword id="KW-0175">Coiled coil</keyword>
<keyword id="KW-0221">Differentiation</keyword>
<keyword id="KW-0469">Meiosis</keyword>
<keyword id="KW-0539">Nucleus</keyword>
<keyword id="KW-1185">Reference proteome</keyword>
<keyword id="KW-0677">Repeat</keyword>
<keyword id="KW-0744">Spermatogenesis</keyword>
<keyword id="KW-0804">Transcription</keyword>
<keyword id="KW-0805">Transcription regulation</keyword>
<evidence type="ECO:0000250" key="1">
    <source>
        <dbReference type="UniProtKB" id="Q58F21"/>
    </source>
</evidence>
<evidence type="ECO:0000250" key="2">
    <source>
        <dbReference type="UniProtKB" id="Q91Y44"/>
    </source>
</evidence>
<evidence type="ECO:0000255" key="3"/>
<evidence type="ECO:0000255" key="4">
    <source>
        <dbReference type="PROSITE-ProRule" id="PRU00035"/>
    </source>
</evidence>
<evidence type="ECO:0000255" key="5">
    <source>
        <dbReference type="PROSITE-ProRule" id="PRU00857"/>
    </source>
</evidence>
<evidence type="ECO:0000256" key="6">
    <source>
        <dbReference type="SAM" id="MobiDB-lite"/>
    </source>
</evidence>
<evidence type="ECO:0000305" key="7"/>
<feature type="chain" id="PRO_0000420476" description="Bromodomain testis-specific protein">
    <location>
        <begin position="1"/>
        <end position="933"/>
    </location>
</feature>
<feature type="domain" description="Bromo 1" evidence="4">
    <location>
        <begin position="28"/>
        <end position="134"/>
    </location>
</feature>
<feature type="domain" description="Bromo 2" evidence="4">
    <location>
        <begin position="278"/>
        <end position="385"/>
    </location>
</feature>
<feature type="domain" description="NET" evidence="5">
    <location>
        <begin position="495"/>
        <end position="577"/>
    </location>
</feature>
<feature type="region of interest" description="Disordered" evidence="6">
    <location>
        <begin position="1"/>
        <end position="21"/>
    </location>
</feature>
<feature type="region of interest" description="Disordered" evidence="6">
    <location>
        <begin position="235"/>
        <end position="263"/>
    </location>
</feature>
<feature type="region of interest" description="Disordered" evidence="6">
    <location>
        <begin position="398"/>
        <end position="425"/>
    </location>
</feature>
<feature type="region of interest" description="Disordered" evidence="6">
    <location>
        <begin position="576"/>
        <end position="610"/>
    </location>
</feature>
<feature type="region of interest" description="Disordered" evidence="6">
    <location>
        <begin position="627"/>
        <end position="662"/>
    </location>
</feature>
<feature type="coiled-coil region" evidence="3">
    <location>
        <begin position="423"/>
        <end position="448"/>
    </location>
</feature>
<feature type="coiled-coil region" evidence="3">
    <location>
        <begin position="829"/>
        <end position="917"/>
    </location>
</feature>
<feature type="short sequence motif" description="Nuclear localization signal" evidence="1">
    <location>
        <begin position="214"/>
        <end position="225"/>
    </location>
</feature>
<feature type="compositionally biased region" description="Low complexity" evidence="6">
    <location>
        <begin position="404"/>
        <end position="418"/>
    </location>
</feature>
<feature type="compositionally biased region" description="Basic and acidic residues" evidence="6">
    <location>
        <begin position="584"/>
        <end position="603"/>
    </location>
</feature>
<feature type="compositionally biased region" description="Low complexity" evidence="6">
    <location>
        <begin position="630"/>
        <end position="660"/>
    </location>
</feature>
<feature type="site" description="Histone H4K5ac binding" evidence="2">
    <location>
        <position position="110"/>
    </location>
</feature>
<feature type="site" description="Histone H4K5ac binding" evidence="2">
    <location>
        <position position="115"/>
    </location>
</feature>
<protein>
    <recommendedName>
        <fullName>Bromodomain testis-specific protein</fullName>
    </recommendedName>
</protein>
<proteinExistence type="inferred from homology"/>
<comment type="function">
    <text evidence="2">Testis-specific chromatin protein that specifically binds histone H4 acetylated at 'Lys-5' and 'Lys-8' (H4K5ac and H4K8ac, respectively) and plays a key role in spermatogenesis. Required in late pachytene spermatocytes: plays a role in meiotic and post-meiotic cells by binding to acetylated histones at the promoter of specific meiotic and post-meiotic genes, facilitating their activation at the appropriate time. In the post-meiotic phase of spermatogenesis, binds to hyperacetylated histones and participates in their general removal from DNA. Also recognizes and binds a subset of butyrylated histones: able to bind histone H4 butyrylated at 'Lys-8' (H4K8ac), while it is not able to bind H4 butyrylated at 'Lys-5' (H4K5ac).</text>
</comment>
<comment type="subcellular location">
    <subcellularLocation>
        <location evidence="2">Nucleus</location>
    </subcellularLocation>
    <text evidence="2">Detected on chromatin.</text>
</comment>
<comment type="domain">
    <text evidence="2">Bromo domains mediate interaction with histones that have acetylated lysine residues at specific positions. Bromo domain 1 mediates binding with histone H4 acetylated at 'Lys-5' and 'Lys-8' (H4K5ac and H4K8ac, respectively). The bromo domains also recognize and bind a subset of butyrylated histones: able to bind histone H4 butyrylated at 'Lys-8' (H4K8ac), while it is not able to bind H4 butyrylated at 'Lys-5' (H4K5ac).</text>
</comment>
<comment type="similarity">
    <text evidence="7">Belongs to the BET family.</text>
</comment>